<reference key="1">
    <citation type="submission" date="2008-04" db="EMBL/GenBank/DDBJ databases">
        <title>Complete sequence of Yersinia pseudotuberculosis PB1/+.</title>
        <authorList>
            <person name="Copeland A."/>
            <person name="Lucas S."/>
            <person name="Lapidus A."/>
            <person name="Glavina del Rio T."/>
            <person name="Dalin E."/>
            <person name="Tice H."/>
            <person name="Bruce D."/>
            <person name="Goodwin L."/>
            <person name="Pitluck S."/>
            <person name="Munk A.C."/>
            <person name="Brettin T."/>
            <person name="Detter J.C."/>
            <person name="Han C."/>
            <person name="Tapia R."/>
            <person name="Schmutz J."/>
            <person name="Larimer F."/>
            <person name="Land M."/>
            <person name="Hauser L."/>
            <person name="Challacombe J.F."/>
            <person name="Green L."/>
            <person name="Lindler L.E."/>
            <person name="Nikolich M.P."/>
            <person name="Richardson P."/>
        </authorList>
    </citation>
    <scope>NUCLEOTIDE SEQUENCE [LARGE SCALE GENOMIC DNA]</scope>
    <source>
        <strain>PB1/+</strain>
    </source>
</reference>
<name>SYE_YERPB</name>
<gene>
    <name evidence="1" type="primary">gltX</name>
    <name type="ordered locus">YPTS_2806</name>
</gene>
<comment type="function">
    <text evidence="1">Catalyzes the attachment of glutamate to tRNA(Glu) in a two-step reaction: glutamate is first activated by ATP to form Glu-AMP and then transferred to the acceptor end of tRNA(Glu).</text>
</comment>
<comment type="catalytic activity">
    <reaction evidence="1">
        <text>tRNA(Glu) + L-glutamate + ATP = L-glutamyl-tRNA(Glu) + AMP + diphosphate</text>
        <dbReference type="Rhea" id="RHEA:23540"/>
        <dbReference type="Rhea" id="RHEA-COMP:9663"/>
        <dbReference type="Rhea" id="RHEA-COMP:9680"/>
        <dbReference type="ChEBI" id="CHEBI:29985"/>
        <dbReference type="ChEBI" id="CHEBI:30616"/>
        <dbReference type="ChEBI" id="CHEBI:33019"/>
        <dbReference type="ChEBI" id="CHEBI:78442"/>
        <dbReference type="ChEBI" id="CHEBI:78520"/>
        <dbReference type="ChEBI" id="CHEBI:456215"/>
        <dbReference type="EC" id="6.1.1.17"/>
    </reaction>
</comment>
<comment type="cofactor">
    <cofactor evidence="1">
        <name>Zn(2+)</name>
        <dbReference type="ChEBI" id="CHEBI:29105"/>
    </cofactor>
    <text evidence="1">Binds 1 zinc ion per subunit.</text>
</comment>
<comment type="subunit">
    <text evidence="1">Monomer.</text>
</comment>
<comment type="subcellular location">
    <subcellularLocation>
        <location evidence="1">Cytoplasm</location>
    </subcellularLocation>
</comment>
<comment type="similarity">
    <text evidence="1">Belongs to the class-I aminoacyl-tRNA synthetase family. Glutamate--tRNA ligase type 1 subfamily.</text>
</comment>
<proteinExistence type="inferred from homology"/>
<sequence>MKIKTRFAPSPTGYLHVGGARTALYSWLFSRHLGGEFVLRIEDTDLERSTQEAIDAIMDGMNWLNLDWDEGPYFQTKRFDRYNAVIDQMLDAGTAYRCYCSKERLEALREAQMANGEKPRYDGHCRDSQCTHGADEPSVVRFRNPQEGSVIFDDKIRGPIEFSNQELDDLIIRRTDGSPTYNFCVVIDDWDMEITHVIRGEDHINNTPRQINILKALGAPVPEYAHVSMILGDDGKKLSKRHGAVGVMQYRDDGYLPEALLNYLVRLGWSHGDQEIFSIEEMTQLFTLDAVSKSASAFNTEKLQWLNHHYINSLPPEQVAVHLSWHVEQLGIDTRNGPELVEIVKLLGERCKTLKEMAESCRYFYEEFDAFDVDAAKKHLRPIARQPLEAVKVKLAAITEWTTENVHNAIQGTADELGVGMGKVGMPLRVAVTGVGQSPGMDVTVHAIGQARTLARIDKALAFISEREAQQ</sequence>
<feature type="chain" id="PRO_1000090126" description="Glutamate--tRNA ligase">
    <location>
        <begin position="1"/>
        <end position="471"/>
    </location>
</feature>
<feature type="short sequence motif" description="'HIGH' region" evidence="1">
    <location>
        <begin position="9"/>
        <end position="19"/>
    </location>
</feature>
<feature type="short sequence motif" description="'KMSKS' region" evidence="1">
    <location>
        <begin position="237"/>
        <end position="241"/>
    </location>
</feature>
<feature type="binding site" evidence="1">
    <location>
        <position position="98"/>
    </location>
    <ligand>
        <name>Zn(2+)</name>
        <dbReference type="ChEBI" id="CHEBI:29105"/>
    </ligand>
</feature>
<feature type="binding site" evidence="1">
    <location>
        <position position="100"/>
    </location>
    <ligand>
        <name>Zn(2+)</name>
        <dbReference type="ChEBI" id="CHEBI:29105"/>
    </ligand>
</feature>
<feature type="binding site" evidence="1">
    <location>
        <position position="125"/>
    </location>
    <ligand>
        <name>Zn(2+)</name>
        <dbReference type="ChEBI" id="CHEBI:29105"/>
    </ligand>
</feature>
<feature type="binding site" evidence="1">
    <location>
        <position position="127"/>
    </location>
    <ligand>
        <name>Zn(2+)</name>
        <dbReference type="ChEBI" id="CHEBI:29105"/>
    </ligand>
</feature>
<feature type="binding site" evidence="1">
    <location>
        <position position="240"/>
    </location>
    <ligand>
        <name>ATP</name>
        <dbReference type="ChEBI" id="CHEBI:30616"/>
    </ligand>
</feature>
<accession>B2K913</accession>
<evidence type="ECO:0000255" key="1">
    <source>
        <dbReference type="HAMAP-Rule" id="MF_00022"/>
    </source>
</evidence>
<dbReference type="EC" id="6.1.1.17" evidence="1"/>
<dbReference type="EMBL" id="CP001048">
    <property type="protein sequence ID" value="ACC89764.1"/>
    <property type="molecule type" value="Genomic_DNA"/>
</dbReference>
<dbReference type="RefSeq" id="WP_011192732.1">
    <property type="nucleotide sequence ID" value="NZ_CP009780.1"/>
</dbReference>
<dbReference type="SMR" id="B2K913"/>
<dbReference type="GeneID" id="49785282"/>
<dbReference type="KEGG" id="ypb:YPTS_2806"/>
<dbReference type="PATRIC" id="fig|502801.10.peg.2233"/>
<dbReference type="GO" id="GO:0005829">
    <property type="term" value="C:cytosol"/>
    <property type="evidence" value="ECO:0007669"/>
    <property type="project" value="TreeGrafter"/>
</dbReference>
<dbReference type="GO" id="GO:0005524">
    <property type="term" value="F:ATP binding"/>
    <property type="evidence" value="ECO:0007669"/>
    <property type="project" value="UniProtKB-UniRule"/>
</dbReference>
<dbReference type="GO" id="GO:0004818">
    <property type="term" value="F:glutamate-tRNA ligase activity"/>
    <property type="evidence" value="ECO:0007669"/>
    <property type="project" value="UniProtKB-UniRule"/>
</dbReference>
<dbReference type="GO" id="GO:0000049">
    <property type="term" value="F:tRNA binding"/>
    <property type="evidence" value="ECO:0007669"/>
    <property type="project" value="InterPro"/>
</dbReference>
<dbReference type="GO" id="GO:0008270">
    <property type="term" value="F:zinc ion binding"/>
    <property type="evidence" value="ECO:0007669"/>
    <property type="project" value="UniProtKB-UniRule"/>
</dbReference>
<dbReference type="GO" id="GO:0006424">
    <property type="term" value="P:glutamyl-tRNA aminoacylation"/>
    <property type="evidence" value="ECO:0007669"/>
    <property type="project" value="UniProtKB-UniRule"/>
</dbReference>
<dbReference type="CDD" id="cd00808">
    <property type="entry name" value="GluRS_core"/>
    <property type="match status" value="1"/>
</dbReference>
<dbReference type="FunFam" id="1.10.10.350:FF:000001">
    <property type="entry name" value="Glutamate--tRNA ligase"/>
    <property type="match status" value="1"/>
</dbReference>
<dbReference type="FunFam" id="3.40.50.620:FF:000007">
    <property type="entry name" value="Glutamate--tRNA ligase"/>
    <property type="match status" value="1"/>
</dbReference>
<dbReference type="Gene3D" id="1.10.10.350">
    <property type="match status" value="1"/>
</dbReference>
<dbReference type="Gene3D" id="3.40.50.620">
    <property type="entry name" value="HUPs"/>
    <property type="match status" value="1"/>
</dbReference>
<dbReference type="HAMAP" id="MF_00022">
    <property type="entry name" value="Glu_tRNA_synth_type1"/>
    <property type="match status" value="1"/>
</dbReference>
<dbReference type="InterPro" id="IPR045462">
    <property type="entry name" value="aa-tRNA-synth_I_cd-bd"/>
</dbReference>
<dbReference type="InterPro" id="IPR020751">
    <property type="entry name" value="aa-tRNA-synth_I_codon-bd_sub2"/>
</dbReference>
<dbReference type="InterPro" id="IPR001412">
    <property type="entry name" value="aa-tRNA-synth_I_CS"/>
</dbReference>
<dbReference type="InterPro" id="IPR008925">
    <property type="entry name" value="aa_tRNA-synth_I_cd-bd_sf"/>
</dbReference>
<dbReference type="InterPro" id="IPR004527">
    <property type="entry name" value="Glu-tRNA-ligase_bac/mito"/>
</dbReference>
<dbReference type="InterPro" id="IPR000924">
    <property type="entry name" value="Glu/Gln-tRNA-synth"/>
</dbReference>
<dbReference type="InterPro" id="IPR020058">
    <property type="entry name" value="Glu/Gln-tRNA-synth_Ib_cat-dom"/>
</dbReference>
<dbReference type="InterPro" id="IPR049940">
    <property type="entry name" value="GluQ/Sye"/>
</dbReference>
<dbReference type="InterPro" id="IPR033910">
    <property type="entry name" value="GluRS_core"/>
</dbReference>
<dbReference type="InterPro" id="IPR014729">
    <property type="entry name" value="Rossmann-like_a/b/a_fold"/>
</dbReference>
<dbReference type="NCBIfam" id="TIGR00464">
    <property type="entry name" value="gltX_bact"/>
    <property type="match status" value="1"/>
</dbReference>
<dbReference type="PANTHER" id="PTHR43311">
    <property type="entry name" value="GLUTAMATE--TRNA LIGASE"/>
    <property type="match status" value="1"/>
</dbReference>
<dbReference type="PANTHER" id="PTHR43311:SF2">
    <property type="entry name" value="GLUTAMATE--TRNA LIGASE, MITOCHONDRIAL-RELATED"/>
    <property type="match status" value="1"/>
</dbReference>
<dbReference type="Pfam" id="PF19269">
    <property type="entry name" value="Anticodon_2"/>
    <property type="match status" value="1"/>
</dbReference>
<dbReference type="Pfam" id="PF00749">
    <property type="entry name" value="tRNA-synt_1c"/>
    <property type="match status" value="1"/>
</dbReference>
<dbReference type="PRINTS" id="PR00987">
    <property type="entry name" value="TRNASYNTHGLU"/>
</dbReference>
<dbReference type="SUPFAM" id="SSF48163">
    <property type="entry name" value="An anticodon-binding domain of class I aminoacyl-tRNA synthetases"/>
    <property type="match status" value="1"/>
</dbReference>
<dbReference type="SUPFAM" id="SSF52374">
    <property type="entry name" value="Nucleotidylyl transferase"/>
    <property type="match status" value="1"/>
</dbReference>
<dbReference type="PROSITE" id="PS00178">
    <property type="entry name" value="AA_TRNA_LIGASE_I"/>
    <property type="match status" value="1"/>
</dbReference>
<organism>
    <name type="scientific">Yersinia pseudotuberculosis serotype IB (strain PB1/+)</name>
    <dbReference type="NCBI Taxonomy" id="502801"/>
    <lineage>
        <taxon>Bacteria</taxon>
        <taxon>Pseudomonadati</taxon>
        <taxon>Pseudomonadota</taxon>
        <taxon>Gammaproteobacteria</taxon>
        <taxon>Enterobacterales</taxon>
        <taxon>Yersiniaceae</taxon>
        <taxon>Yersinia</taxon>
    </lineage>
</organism>
<protein>
    <recommendedName>
        <fullName evidence="1">Glutamate--tRNA ligase</fullName>
        <ecNumber evidence="1">6.1.1.17</ecNumber>
    </recommendedName>
    <alternativeName>
        <fullName evidence="1">Glutamyl-tRNA synthetase</fullName>
        <shortName evidence="1">GluRS</shortName>
    </alternativeName>
</protein>
<keyword id="KW-0030">Aminoacyl-tRNA synthetase</keyword>
<keyword id="KW-0067">ATP-binding</keyword>
<keyword id="KW-0963">Cytoplasm</keyword>
<keyword id="KW-0436">Ligase</keyword>
<keyword id="KW-0479">Metal-binding</keyword>
<keyword id="KW-0547">Nucleotide-binding</keyword>
<keyword id="KW-0648">Protein biosynthesis</keyword>
<keyword id="KW-0862">Zinc</keyword>